<evidence type="ECO:0000250" key="1">
    <source>
        <dbReference type="UniProtKB" id="P00897"/>
    </source>
</evidence>
<evidence type="ECO:0000269" key="2">
    <source>
    </source>
</evidence>
<evidence type="ECO:0000269" key="3">
    <source>
    </source>
</evidence>
<evidence type="ECO:0000269" key="4">
    <source>
    </source>
</evidence>
<evidence type="ECO:0000269" key="5">
    <source>
    </source>
</evidence>
<evidence type="ECO:0000305" key="6"/>
<evidence type="ECO:0007829" key="7">
    <source>
        <dbReference type="PDB" id="1I1Q"/>
    </source>
</evidence>
<sequence length="520" mass="57088">MQTPKPTLELLTCDAAYRENPTALFHQVCGDRPATLLLESADIDSKDDLKSLLLVDSALRITALGDTVTIQALSDNGASLLPLLDTALPAGVENDVLPAGRVLRFPPVSPLLDEDARLCSLSVFDAFRLLQGVVNIPTQEREAMFFGGLFAYDLVAGFEALPHLEAGNNCPDYCFYLAETLMVIDHQKKSTRIQASLFTASDREKQRLNARLAYLSQQLTQPAPPLPVTPVPDMRCECNQSDDAFGAVVRQLQKAIRAGEIFQVVPSRRFSLPCPSPLAAYYVLKKSNPSPYMFFMQDNDFTLFGASPESSLKYDAASRQIEIYPIAGTRPRGRRADGTLDRDLDSRIELDMRTDHKELSEHLMLVDLARNDLARICTPGSRYVADLTKVDRYSYVMHLVSRVVGELRHDLDALHAYRACMNMGTLSGAPKVRAMQLIADAEGQRRGSYGGAVGYFTAHGDLDTCIVIRSALVENGIATVQAGAGIVLDSVPQSEADETRNKARAVLRAIATAHHAQETF</sequence>
<reference key="1">
    <citation type="journal article" date="1982" name="J. Mol. Biol.">
        <title>Nucleotide sequence of trpE of Salmonella typhimurium and its homology with the corresponding sequence of Escherichia coli.</title>
        <authorList>
            <person name="Yanofsky C."/>
            <person name="van Cleemput M."/>
        </authorList>
    </citation>
    <scope>NUCLEOTIDE SEQUENCE [GENOMIC DNA]</scope>
</reference>
<reference key="2">
    <citation type="journal article" date="2001" name="Nature">
        <title>Complete genome sequence of Salmonella enterica serovar Typhimurium LT2.</title>
        <authorList>
            <person name="McClelland M."/>
            <person name="Sanderson K.E."/>
            <person name="Spieth J."/>
            <person name="Clifton S.W."/>
            <person name="Latreille P."/>
            <person name="Courtney L."/>
            <person name="Porwollik S."/>
            <person name="Ali J."/>
            <person name="Dante M."/>
            <person name="Du F."/>
            <person name="Hou S."/>
            <person name="Layman D."/>
            <person name="Leonard S."/>
            <person name="Nguyen C."/>
            <person name="Scott K."/>
            <person name="Holmes A."/>
            <person name="Grewal N."/>
            <person name="Mulvaney E."/>
            <person name="Ryan E."/>
            <person name="Sun H."/>
            <person name="Florea L."/>
            <person name="Miller W."/>
            <person name="Stoneking T."/>
            <person name="Nhan M."/>
            <person name="Waterston R."/>
            <person name="Wilson R.K."/>
        </authorList>
    </citation>
    <scope>NUCLEOTIDE SEQUENCE [LARGE SCALE GENOMIC DNA]</scope>
    <source>
        <strain>LT2 / SGSC1412 / ATCC 700720</strain>
    </source>
</reference>
<reference key="3">
    <citation type="journal article" date="1974" name="Biochemistry">
        <title>Separation of anthranilate synthetase components I and II of Escherichia coli, Salmonella typhimurium, and Serratia marcescens and determination of their amino-terminal sequences by automatic Edman degradation.</title>
        <authorList>
            <person name="Li S.-L."/>
            <person name="Hanlon J."/>
            <person name="Yanofsky C."/>
        </authorList>
    </citation>
    <scope>PROTEIN SEQUENCE OF 1-25</scope>
    <source>
        <strain>ST-13</strain>
    </source>
</reference>
<reference key="4">
    <citation type="journal article" date="1978" name="J. Mol. Biol.">
        <title>Comparison of the nucleotide sequences of the initial transcribed regions of the tryptophan operons of Escherichia coli and Salmonella typhimurium.</title>
        <authorList>
            <person name="Lee F."/>
            <person name="Bertrand K."/>
            <person name="Bennett G.N."/>
            <person name="Yanofsky C."/>
        </authorList>
    </citation>
    <scope>NUCLEOTIDE SEQUENCE [GENOMIC DNA] OF 1-39</scope>
</reference>
<reference key="5">
    <citation type="journal article" date="1980" name="J. Mol. Biol.">
        <title>Nucleotide sequences of the trpG regions of Escherichia coli, Shigella dysenteriae, Salmonella typhimurium and Serratia marcescens.</title>
        <authorList>
            <person name="Nichols B.P."/>
            <person name="Miozzari G.F."/>
            <person name="van Cleemput M."/>
            <person name="Bennett G.N."/>
            <person name="Yanofsky C."/>
        </authorList>
    </citation>
    <scope>NUCLEOTIDE SEQUENCE [GENOMIC DNA] OF 495-520</scope>
    <source>
        <strain>LT2</strain>
    </source>
</reference>
<reference key="6">
    <citation type="journal article" date="1974" name="Biochemistry">
        <title>Monomeric and dimeric forms of component II of the anthranilate synthetase--anthranilate 5-phosphoribosylpyrophosphate phosphoribosyltransferase complex of Salmonella typhimurium. Implications concerning the mode of assembly of the complex.</title>
        <authorList>
            <person name="Grieshaber M."/>
            <person name="Bauerle R."/>
        </authorList>
    </citation>
    <scope>FUNCTION</scope>
    <scope>BIOPHYSICOCHEMICAL PROPERTIES</scope>
    <scope>ACTIVITY REGULATION</scope>
    <scope>SUBUNIT</scope>
</reference>
<reference key="7">
    <citation type="journal article" date="1991" name="J. Biol. Chem.">
        <title>Identification of amino acid residues involved in feedback regulation of the anthranilate synthase complex from Salmonella typhimurium. Evidence for an amino-terminal regulatory site.</title>
        <authorList>
            <person name="Caligiuri M.G."/>
            <person name="Bauerle R."/>
        </authorList>
    </citation>
    <scope>ACTIVITY REGULATION</scope>
    <scope>BIOPHYSICOCHEMICAL PROPERTIES</scope>
    <scope>MUTAGENESIS OF GLU-39; SER-40; ALA-41; ARG-128; CYS-174; ASN-288; PRO-289; MET-293; PHE-294; GLY-305; ARG-402; GLY-460; CYS-465 AND HIS-515</scope>
</reference>
<reference key="8">
    <citation type="journal article" date="1999" name="Acta Crystallogr. D">
        <title>Crystallization and preliminary crystallographic studies of the anthranilate synthase partial complex from Salmonella typhimurium.</title>
        <authorList>
            <person name="Tolbert W.D."/>
            <person name="Chatterji S."/>
            <person name="Bauerle R."/>
            <person name="Kretsinger R."/>
        </authorList>
    </citation>
    <scope>CRYSTALLIZATION</scope>
    <scope>COFACTOR</scope>
    <scope>SUBUNIT</scope>
</reference>
<reference key="9">
    <citation type="journal article" date="2001" name="Nat. Struct. Biol.">
        <title>Structure of the cooperative allosteric anthranilate synthase from Salmonella typhimurium.</title>
        <authorList>
            <person name="Morollo A.A."/>
            <person name="Eck M.J."/>
        </authorList>
    </citation>
    <scope>X-RAY CRYSTALLOGRAPHY (1.9 ANGSTROMS) OF 2-192 IN COMPLEX WITH TRYPTOPHAN</scope>
    <scope>ACTIVITY REGULATION</scope>
    <scope>SUBUNIT</scope>
</reference>
<organism>
    <name type="scientific">Salmonella typhimurium (strain LT2 / SGSC1412 / ATCC 700720)</name>
    <dbReference type="NCBI Taxonomy" id="99287"/>
    <lineage>
        <taxon>Bacteria</taxon>
        <taxon>Pseudomonadati</taxon>
        <taxon>Pseudomonadota</taxon>
        <taxon>Gammaproteobacteria</taxon>
        <taxon>Enterobacterales</taxon>
        <taxon>Enterobacteriaceae</taxon>
        <taxon>Salmonella</taxon>
    </lineage>
</organism>
<name>TRPE_SALTY</name>
<proteinExistence type="evidence at protein level"/>
<accession>P00898</accession>
<feature type="chain" id="PRO_0000154110" description="Anthranilate synthase component 1">
    <location>
        <begin position="1"/>
        <end position="520"/>
    </location>
</feature>
<feature type="binding site" evidence="3">
    <location>
        <position position="40"/>
    </location>
    <ligand>
        <name>L-tryptophan</name>
        <dbReference type="ChEBI" id="CHEBI:57912"/>
    </ligand>
</feature>
<feature type="binding site" evidence="3">
    <location>
        <position position="50"/>
    </location>
    <ligand>
        <name>L-tryptophan</name>
        <dbReference type="ChEBI" id="CHEBI:57912"/>
    </ligand>
</feature>
<feature type="binding site">
    <location>
        <begin position="291"/>
        <end position="293"/>
    </location>
    <ligand>
        <name>L-tryptophan</name>
        <dbReference type="ChEBI" id="CHEBI:57912"/>
    </ligand>
</feature>
<feature type="binding site" evidence="1">
    <location>
        <begin position="328"/>
        <end position="329"/>
    </location>
    <ligand>
        <name>chorismate</name>
        <dbReference type="ChEBI" id="CHEBI:29748"/>
    </ligand>
</feature>
<feature type="binding site" evidence="1">
    <location>
        <position position="361"/>
    </location>
    <ligand>
        <name>Mg(2+)</name>
        <dbReference type="ChEBI" id="CHEBI:18420"/>
    </ligand>
</feature>
<feature type="binding site" evidence="1">
    <location>
        <position position="449"/>
    </location>
    <ligand>
        <name>chorismate</name>
        <dbReference type="ChEBI" id="CHEBI:29748"/>
    </ligand>
</feature>
<feature type="binding site" evidence="1">
    <location>
        <position position="469"/>
    </location>
    <ligand>
        <name>chorismate</name>
        <dbReference type="ChEBI" id="CHEBI:29748"/>
    </ligand>
</feature>
<feature type="binding site" evidence="1">
    <location>
        <begin position="483"/>
        <end position="485"/>
    </location>
    <ligand>
        <name>chorismate</name>
        <dbReference type="ChEBI" id="CHEBI:29748"/>
    </ligand>
</feature>
<feature type="binding site" evidence="1">
    <location>
        <position position="485"/>
    </location>
    <ligand>
        <name>chorismate</name>
        <dbReference type="ChEBI" id="CHEBI:29748"/>
    </ligand>
</feature>
<feature type="binding site" evidence="1">
    <location>
        <position position="498"/>
    </location>
    <ligand>
        <name>Mg(2+)</name>
        <dbReference type="ChEBI" id="CHEBI:18420"/>
    </ligand>
</feature>
<feature type="mutagenesis site" description="Complete loss of feedback control by tryptophan." evidence="4">
    <original>E</original>
    <variation>K</variation>
    <location>
        <position position="39"/>
    </location>
</feature>
<feature type="mutagenesis site" description="Complete loss of feedback control by tryptophan." evidence="4">
    <original>S</original>
    <variation>F</variation>
    <location>
        <position position="40"/>
    </location>
</feature>
<feature type="mutagenesis site" description="Decrease in feedback control by tryptophan." evidence="4">
    <original>A</original>
    <variation>V</variation>
    <location>
        <position position="41"/>
    </location>
</feature>
<feature type="mutagenesis site" description="Almost no change in feedback control by tryptophan." evidence="4">
    <original>R</original>
    <variation>H</variation>
    <location>
        <position position="128"/>
    </location>
</feature>
<feature type="mutagenesis site" description="Almost no change in feedback control by tryptophan." evidence="4">
    <original>C</original>
    <variation>Y</variation>
    <location>
        <position position="174"/>
    </location>
</feature>
<feature type="mutagenesis site" description="Decrease in feedback control by tryptophan." evidence="4">
    <original>N</original>
    <variation>D</variation>
    <location>
        <position position="288"/>
    </location>
</feature>
<feature type="mutagenesis site" description="Decrease in feedback control by tryptophan." evidence="4">
    <original>P</original>
    <variation>L</variation>
    <location>
        <position position="289"/>
    </location>
</feature>
<feature type="mutagenesis site" description="Complete loss of feedback control by tryptophan." evidence="4">
    <original>M</original>
    <variation>T</variation>
    <location>
        <position position="293"/>
    </location>
</feature>
<feature type="mutagenesis site" description="Decrease in feedback control by tryptophan." evidence="4">
    <original>F</original>
    <variation>L</variation>
    <location>
        <position position="294"/>
    </location>
</feature>
<feature type="mutagenesis site" description="Decrease in feedback control by tryptophan." evidence="4">
    <original>G</original>
    <variation>S</variation>
    <location>
        <position position="305"/>
    </location>
</feature>
<feature type="mutagenesis site" description="Almost no change in feedback control by tryptophan." evidence="4">
    <original>R</original>
    <variation>W</variation>
    <location>
        <position position="402"/>
    </location>
</feature>
<feature type="mutagenesis site" description="Almost no change in feedback control by tryptophan." evidence="4">
    <original>G</original>
    <variation>D</variation>
    <location>
        <position position="460"/>
    </location>
</feature>
<feature type="mutagenesis site" description="Complete loss of feedback control by tryptophan. 4-fold decrease of affinity binding for chorismate." evidence="4">
    <original>C</original>
    <variation>Y</variation>
    <location>
        <position position="465"/>
    </location>
</feature>
<feature type="mutagenesis site" description="Almost no change in feedback control by tryptophan." evidence="4">
    <original>H</original>
    <variation>Y</variation>
    <location>
        <position position="515"/>
    </location>
</feature>
<feature type="sequence conflict" description="In Ref. 1; CAA24668." evidence="6" ref="1">
    <original>I</original>
    <variation>F</variation>
    <location>
        <position position="61"/>
    </location>
</feature>
<feature type="sequence conflict" description="In Ref. 1; CAA24668." evidence="6" ref="1">
    <original>I</original>
    <variation>S</variation>
    <location>
        <position position="70"/>
    </location>
</feature>
<feature type="sequence conflict" description="In Ref. 1; CAA24668." evidence="6" ref="1">
    <original>L</original>
    <variation>H</variation>
    <location>
        <position position="164"/>
    </location>
</feature>
<feature type="sequence conflict" description="In Ref. 1; CAA24668." evidence="6" ref="1">
    <original>E</original>
    <variation>G</variation>
    <location>
        <position position="179"/>
    </location>
</feature>
<feature type="sequence conflict" description="In Ref. 1; CAA24668." evidence="6" ref="1">
    <original>Q</original>
    <variation>R</variation>
    <location>
        <position position="187"/>
    </location>
</feature>
<feature type="sequence conflict" description="In Ref. 1; CAA24668." evidence="6" ref="1">
    <original>I</original>
    <variation>T</variation>
    <location>
        <position position="348"/>
    </location>
</feature>
<feature type="sequence conflict" description="In Ref. 1; CAA24668." evidence="6" ref="1">
    <original>LS</original>
    <variation>PC</variation>
    <location>
        <begin position="359"/>
        <end position="360"/>
    </location>
</feature>
<feature type="sequence conflict" description="In Ref. 1; CAA24668." evidence="6" ref="1">
    <original>L</original>
    <variation>P</variation>
    <location>
        <position position="368"/>
    </location>
</feature>
<feature type="sequence conflict" description="In Ref. 1; CAA24668." evidence="6" ref="1">
    <original>Y</original>
    <variation>C</variation>
    <location>
        <position position="395"/>
    </location>
</feature>
<feature type="sequence conflict" description="In Ref. 1; CAA24668." evidence="6" ref="1">
    <original>M</original>
    <variation>I</variation>
    <location>
        <position position="397"/>
    </location>
</feature>
<feature type="sequence conflict" description="In Ref. 1; CAA24668." evidence="6" ref="1">
    <original>Q</original>
    <variation>R</variation>
    <location>
        <position position="481"/>
    </location>
</feature>
<feature type="strand" evidence="7">
    <location>
        <begin position="9"/>
        <end position="15"/>
    </location>
</feature>
<feature type="helix" evidence="7">
    <location>
        <begin position="21"/>
        <end position="29"/>
    </location>
</feature>
<feature type="strand" evidence="7">
    <location>
        <begin position="33"/>
        <end position="39"/>
    </location>
</feature>
<feature type="helix" evidence="7">
    <location>
        <begin position="43"/>
        <end position="45"/>
    </location>
</feature>
<feature type="strand" evidence="7">
    <location>
        <begin position="50"/>
        <end position="64"/>
    </location>
</feature>
<feature type="strand" evidence="7">
    <location>
        <begin position="67"/>
        <end position="74"/>
    </location>
</feature>
<feature type="helix" evidence="7">
    <location>
        <begin position="75"/>
        <end position="78"/>
    </location>
</feature>
<feature type="helix" evidence="7">
    <location>
        <begin position="80"/>
        <end position="85"/>
    </location>
</feature>
<feature type="strand" evidence="7">
    <location>
        <begin position="93"/>
        <end position="97"/>
    </location>
</feature>
<feature type="strand" evidence="7">
    <location>
        <begin position="100"/>
        <end position="104"/>
    </location>
</feature>
<feature type="helix" evidence="7">
    <location>
        <begin position="114"/>
        <end position="118"/>
    </location>
</feature>
<feature type="helix" evidence="7">
    <location>
        <begin position="125"/>
        <end position="132"/>
    </location>
</feature>
<feature type="strand" evidence="7">
    <location>
        <begin position="143"/>
        <end position="150"/>
    </location>
</feature>
<feature type="helix" evidence="7">
    <location>
        <begin position="152"/>
        <end position="157"/>
    </location>
</feature>
<feature type="strand" evidence="7">
    <location>
        <begin position="167"/>
        <end position="169"/>
    </location>
</feature>
<feature type="strand" evidence="7">
    <location>
        <begin position="172"/>
        <end position="185"/>
    </location>
</feature>
<feature type="turn" evidence="7">
    <location>
        <begin position="186"/>
        <end position="189"/>
    </location>
</feature>
<feature type="strand" evidence="7">
    <location>
        <begin position="190"/>
        <end position="197"/>
    </location>
</feature>
<feature type="helix" evidence="7">
    <location>
        <begin position="202"/>
        <end position="220"/>
    </location>
</feature>
<feature type="strand" evidence="7">
    <location>
        <begin position="237"/>
        <end position="240"/>
    </location>
</feature>
<feature type="helix" evidence="7">
    <location>
        <begin position="242"/>
        <end position="257"/>
    </location>
</feature>
<feature type="strand" evidence="7">
    <location>
        <begin position="262"/>
        <end position="264"/>
    </location>
</feature>
<feature type="strand" evidence="7">
    <location>
        <begin position="267"/>
        <end position="273"/>
    </location>
</feature>
<feature type="helix" evidence="7">
    <location>
        <begin position="277"/>
        <end position="287"/>
    </location>
</feature>
<feature type="strand" evidence="7">
    <location>
        <begin position="291"/>
        <end position="297"/>
    </location>
</feature>
<feature type="strand" evidence="7">
    <location>
        <begin position="302"/>
        <end position="309"/>
    </location>
</feature>
<feature type="strand" evidence="7">
    <location>
        <begin position="311"/>
        <end position="315"/>
    </location>
</feature>
<feature type="turn" evidence="7">
    <location>
        <begin position="316"/>
        <end position="319"/>
    </location>
</feature>
<feature type="strand" evidence="7">
    <location>
        <begin position="320"/>
        <end position="323"/>
    </location>
</feature>
<feature type="strand" evidence="7">
    <location>
        <begin position="326"/>
        <end position="331"/>
    </location>
</feature>
<feature type="helix" evidence="7">
    <location>
        <begin position="342"/>
        <end position="354"/>
    </location>
</feature>
<feature type="helix" evidence="7">
    <location>
        <begin position="356"/>
        <end position="376"/>
    </location>
</feature>
<feature type="strand" evidence="7">
    <location>
        <begin position="383"/>
        <end position="392"/>
    </location>
</feature>
<feature type="strand" evidence="7">
    <location>
        <begin position="394"/>
        <end position="407"/>
    </location>
</feature>
<feature type="helix" evidence="7">
    <location>
        <begin position="413"/>
        <end position="420"/>
    </location>
</feature>
<feature type="helix" evidence="7">
    <location>
        <begin position="424"/>
        <end position="426"/>
    </location>
</feature>
<feature type="strand" evidence="7">
    <location>
        <begin position="427"/>
        <end position="430"/>
    </location>
</feature>
<feature type="helix" evidence="7">
    <location>
        <begin position="431"/>
        <end position="442"/>
    </location>
</feature>
<feature type="turn" evidence="7">
    <location>
        <begin position="447"/>
        <end position="450"/>
    </location>
</feature>
<feature type="strand" evidence="7">
    <location>
        <begin position="451"/>
        <end position="457"/>
    </location>
</feature>
<feature type="strand" evidence="7">
    <location>
        <begin position="462"/>
        <end position="466"/>
    </location>
</feature>
<feature type="strand" evidence="7">
    <location>
        <begin position="469"/>
        <end position="474"/>
    </location>
</feature>
<feature type="strand" evidence="7">
    <location>
        <begin position="477"/>
        <end position="483"/>
    </location>
</feature>
<feature type="helix" evidence="7">
    <location>
        <begin position="492"/>
        <end position="513"/>
    </location>
</feature>
<gene>
    <name type="primary">trpE</name>
    <name type="ordered locus">STM1723</name>
</gene>
<comment type="function">
    <text evidence="5">Part of a heterotetrameric complex that catalyzes the two-step biosynthesis of anthranilate, an intermediate in the biosynthesis of L-tryptophan. In the first step, the glutamine-binding beta subunit (TrpG) of anthranilate synthase (AS) provides the glutamine amidotransferase activity which generates ammonia as a substrate that, along with chorismate, is used in the second step, catalyzed by the large alpha subunit of AS (TrpE) to produce anthranilate. In the absence of TrpG, TrpE can synthesize anthranilate directly from chorismate and high concentrations of ammonia.</text>
</comment>
<comment type="catalytic activity">
    <reaction>
        <text>chorismate + L-glutamine = anthranilate + pyruvate + L-glutamate + H(+)</text>
        <dbReference type="Rhea" id="RHEA:21732"/>
        <dbReference type="ChEBI" id="CHEBI:15361"/>
        <dbReference type="ChEBI" id="CHEBI:15378"/>
        <dbReference type="ChEBI" id="CHEBI:16567"/>
        <dbReference type="ChEBI" id="CHEBI:29748"/>
        <dbReference type="ChEBI" id="CHEBI:29985"/>
        <dbReference type="ChEBI" id="CHEBI:58359"/>
        <dbReference type="EC" id="4.1.3.27"/>
    </reaction>
</comment>
<comment type="cofactor">
    <cofactor evidence="2">
        <name>Mg(2+)</name>
        <dbReference type="ChEBI" id="CHEBI:18420"/>
    </cofactor>
    <text evidence="2">Binds 1 Mg(2+) ion per subunit.</text>
</comment>
<comment type="activity regulation">
    <text evidence="3 4 5">Cooperatively feedback inhibited by tryptophan.</text>
</comment>
<comment type="biophysicochemical properties">
    <kinetics>
        <KM evidence="4">2.3 uM for chorismate</KM>
        <KM evidence="4 5">4 uM for anthranilate (with the dimeric form and for the phosphoribosyltransferase activity at pH 7.5)</KM>
        <KM evidence="4 5">6 uM for anthranilate (with the monomeric form and for the phosphoribosyltransferase activity at pH 7.5)</KM>
        <KM evidence="4 5">10 uM for phosphoribosylpyrophosphate (with the monomeric and dimeric forms and for the phosphoribosyltransferase activity at pH 7.5)</KM>
        <KM evidence="4 5">30 uM for magnesium ion (with the monomeric and dimeric forms and for the phosphoribosyltransferase activity at pH 7.5)</KM>
        <Vmax evidence="4 5">5800.0 nmol/min/mg enzyme (with the dimeric form and for the phosphoribosyltransferase activity at pH 7.5)</Vmax>
        <Vmax evidence="4 5">4700.0 nmol/min/mg enzyme (for the monomeric form at pH 7.5)</Vmax>
        <text evidence="4">kcat is 12 sec(-1) for chorismate.</text>
    </kinetics>
</comment>
<comment type="pathway">
    <text>Amino-acid biosynthesis; L-tryptophan biosynthesis; L-tryptophan from chorismate: step 1/5.</text>
</comment>
<comment type="subunit">
    <text evidence="6">Homodimer. In fact, exists in a monomer-dimer equilibrium in solution, shifted spontaneously in favor of the dimer; the monomer has a reduced activity compared with the dimer. Heterotetramer consisting of two non-identical subunits: a beta subunit (TrpG) and a large alpha subunit (TrpE) (Potential).</text>
</comment>
<comment type="similarity">
    <text evidence="6">Belongs to the anthranilate synthase component I family.</text>
</comment>
<dbReference type="EC" id="4.1.3.27"/>
<dbReference type="EMBL" id="V01378">
    <property type="protein sequence ID" value="CAA24668.1"/>
    <property type="molecule type" value="Genomic_DNA"/>
</dbReference>
<dbReference type="EMBL" id="AE006468">
    <property type="protein sequence ID" value="AAL20641.1"/>
    <property type="molecule type" value="Genomic_DNA"/>
</dbReference>
<dbReference type="EMBL" id="M24960">
    <property type="protein sequence ID" value="AAA27238.1"/>
    <property type="molecule type" value="Genomic_DNA"/>
</dbReference>
<dbReference type="EMBL" id="J01811">
    <property type="protein sequence ID" value="AAA57311.1"/>
    <property type="molecule type" value="Genomic_DNA"/>
</dbReference>
<dbReference type="PIR" id="A92878">
    <property type="entry name" value="NNEB1T"/>
</dbReference>
<dbReference type="RefSeq" id="NP_460682.1">
    <property type="nucleotide sequence ID" value="NC_003197.2"/>
</dbReference>
<dbReference type="RefSeq" id="WP_001194371.1">
    <property type="nucleotide sequence ID" value="NC_003197.2"/>
</dbReference>
<dbReference type="PDB" id="1I1Q">
    <property type="method" value="X-ray"/>
    <property type="resolution" value="1.90 A"/>
    <property type="chains" value="A=1-520"/>
</dbReference>
<dbReference type="PDBsum" id="1I1Q"/>
<dbReference type="SMR" id="P00898"/>
<dbReference type="IntAct" id="P00898">
    <property type="interactions" value="1"/>
</dbReference>
<dbReference type="MINT" id="P00898"/>
<dbReference type="STRING" id="99287.STM1723"/>
<dbReference type="BindingDB" id="P00898"/>
<dbReference type="ChEMBL" id="CHEMBL1075109"/>
<dbReference type="PaxDb" id="99287-STM1723"/>
<dbReference type="GeneID" id="1253242"/>
<dbReference type="KEGG" id="stm:STM1723"/>
<dbReference type="PATRIC" id="fig|99287.12.peg.1819"/>
<dbReference type="HOGENOM" id="CLU_006493_9_4_6"/>
<dbReference type="PhylomeDB" id="P00898"/>
<dbReference type="BioCyc" id="SENT99287:STM1723-MONOMER"/>
<dbReference type="SABIO-RK" id="P00898"/>
<dbReference type="STRENDA-DB" id="MZUAWP">
    <property type="experiment" value="Fluorimetric assay monitoring the formation of anthranilate by anthranilate synthase complexes"/>
</dbReference>
<dbReference type="UniPathway" id="UPA00035">
    <property type="reaction ID" value="UER00040"/>
</dbReference>
<dbReference type="EvolutionaryTrace" id="P00898"/>
<dbReference type="Proteomes" id="UP000001014">
    <property type="component" value="Chromosome"/>
</dbReference>
<dbReference type="GO" id="GO:0004049">
    <property type="term" value="F:anthranilate synthase activity"/>
    <property type="evidence" value="ECO:0007669"/>
    <property type="project" value="UniProtKB-EC"/>
</dbReference>
<dbReference type="GO" id="GO:0046872">
    <property type="term" value="F:metal ion binding"/>
    <property type="evidence" value="ECO:0007669"/>
    <property type="project" value="UniProtKB-KW"/>
</dbReference>
<dbReference type="GO" id="GO:0000162">
    <property type="term" value="P:L-tryptophan biosynthetic process"/>
    <property type="evidence" value="ECO:0000318"/>
    <property type="project" value="GO_Central"/>
</dbReference>
<dbReference type="FunFam" id="3.60.120.10:FF:000006">
    <property type="entry name" value="Anthranilate synthase component 1"/>
    <property type="match status" value="1"/>
</dbReference>
<dbReference type="Gene3D" id="3.60.120.10">
    <property type="entry name" value="Anthranilate synthase"/>
    <property type="match status" value="1"/>
</dbReference>
<dbReference type="InterPro" id="IPR005801">
    <property type="entry name" value="ADC_synthase"/>
</dbReference>
<dbReference type="InterPro" id="IPR019999">
    <property type="entry name" value="Anth_synth_I-like"/>
</dbReference>
<dbReference type="InterPro" id="IPR006805">
    <property type="entry name" value="Anth_synth_I_N"/>
</dbReference>
<dbReference type="InterPro" id="IPR005257">
    <property type="entry name" value="Anth_synth_I_TrpE"/>
</dbReference>
<dbReference type="InterPro" id="IPR015890">
    <property type="entry name" value="Chorismate_C"/>
</dbReference>
<dbReference type="NCBIfam" id="NF010079">
    <property type="entry name" value="PRK13564.1"/>
    <property type="match status" value="1"/>
</dbReference>
<dbReference type="NCBIfam" id="TIGR00565">
    <property type="entry name" value="trpE_proteo"/>
    <property type="match status" value="1"/>
</dbReference>
<dbReference type="PANTHER" id="PTHR11236">
    <property type="entry name" value="AMINOBENZOATE/ANTHRANILATE SYNTHASE"/>
    <property type="match status" value="1"/>
</dbReference>
<dbReference type="PANTHER" id="PTHR11236:SF49">
    <property type="entry name" value="ANTHRANILATE SYNTHASE COMPONENT 1"/>
    <property type="match status" value="1"/>
</dbReference>
<dbReference type="Pfam" id="PF04715">
    <property type="entry name" value="Anth_synt_I_N"/>
    <property type="match status" value="1"/>
</dbReference>
<dbReference type="Pfam" id="PF00425">
    <property type="entry name" value="Chorismate_bind"/>
    <property type="match status" value="1"/>
</dbReference>
<dbReference type="PIRSF" id="PIRSF001373">
    <property type="entry name" value="TrpE"/>
    <property type="match status" value="1"/>
</dbReference>
<dbReference type="PRINTS" id="PR00095">
    <property type="entry name" value="ANTSNTHASEI"/>
</dbReference>
<dbReference type="SUPFAM" id="SSF56322">
    <property type="entry name" value="ADC synthase"/>
    <property type="match status" value="1"/>
</dbReference>
<protein>
    <recommendedName>
        <fullName>Anthranilate synthase component 1</fullName>
        <shortName>AS</shortName>
        <shortName>ASI</shortName>
        <ecNumber>4.1.3.27</ecNumber>
    </recommendedName>
</protein>
<keyword id="KW-0002">3D-structure</keyword>
<keyword id="KW-0021">Allosteric enzyme</keyword>
<keyword id="KW-0028">Amino-acid biosynthesis</keyword>
<keyword id="KW-0057">Aromatic amino acid biosynthesis</keyword>
<keyword id="KW-0903">Direct protein sequencing</keyword>
<keyword id="KW-0456">Lyase</keyword>
<keyword id="KW-0460">Magnesium</keyword>
<keyword id="KW-0479">Metal-binding</keyword>
<keyword id="KW-1185">Reference proteome</keyword>
<keyword id="KW-0822">Tryptophan biosynthesis</keyword>